<dbReference type="EC" id="2.1.1.-"/>
<dbReference type="EMBL" id="AE008384">
    <property type="protein sequence ID" value="AAM29950.1"/>
    <property type="status" value="ALT_INIT"/>
    <property type="molecule type" value="Genomic_DNA"/>
</dbReference>
<dbReference type="SMR" id="Q8Q083"/>
<dbReference type="KEGG" id="mma:MM_0254"/>
<dbReference type="PATRIC" id="fig|192952.21.peg.309"/>
<dbReference type="eggNOG" id="arCOG00854">
    <property type="taxonomic scope" value="Archaea"/>
</dbReference>
<dbReference type="HOGENOM" id="CLU_086562_0_0_2"/>
<dbReference type="Proteomes" id="UP000000595">
    <property type="component" value="Chromosome"/>
</dbReference>
<dbReference type="GO" id="GO:0008168">
    <property type="term" value="F:methyltransferase activity"/>
    <property type="evidence" value="ECO:0007669"/>
    <property type="project" value="UniProtKB-KW"/>
</dbReference>
<dbReference type="GO" id="GO:0032259">
    <property type="term" value="P:methylation"/>
    <property type="evidence" value="ECO:0007669"/>
    <property type="project" value="UniProtKB-KW"/>
</dbReference>
<dbReference type="Gene3D" id="3.40.718.10">
    <property type="entry name" value="Isopropylmalate Dehydrogenase"/>
    <property type="match status" value="1"/>
</dbReference>
<dbReference type="InterPro" id="IPR016764">
    <property type="entry name" value="MeTrfase_MtxX_xsu"/>
</dbReference>
<dbReference type="NCBIfam" id="TIGR03270">
    <property type="entry name" value="methan_mark_4"/>
    <property type="match status" value="1"/>
</dbReference>
<dbReference type="PIRSF" id="PIRSF019709">
    <property type="entry name" value="Methyltransf_MtxX"/>
    <property type="match status" value="1"/>
</dbReference>
<dbReference type="SUPFAM" id="SSF53659">
    <property type="entry name" value="Isocitrate/Isopropylmalate dehydrogenase-like"/>
    <property type="match status" value="1"/>
</dbReference>
<name>MTXX_METMA</name>
<protein>
    <recommendedName>
        <fullName>Putative methyltransferase mtx subunit X</fullName>
        <ecNumber>2.1.1.-</ecNumber>
    </recommendedName>
</protein>
<evidence type="ECO:0000250" key="1"/>
<evidence type="ECO:0000305" key="2"/>
<feature type="chain" id="PRO_0000135932" description="Putative methyltransferase mtx subunit X">
    <location>
        <begin position="1"/>
        <end position="280"/>
    </location>
</feature>
<comment type="subunit">
    <text evidence="1">May be part of a complex composed of 3 subunits; MtxA, MtxH and MtxX.</text>
</comment>
<comment type="similarity">
    <text evidence="2">Belongs to the MtxX family.</text>
</comment>
<comment type="sequence caution" evidence="2">
    <conflict type="erroneous initiation">
        <sequence resource="EMBL-CDS" id="AAM29950"/>
    </conflict>
</comment>
<sequence>MYALLEAIEARARANRARVAMGIRDPNHKTLESAWKAQELGYAQVVLVGSKKEIDKIGTGLEVIDTEDPEKVLSDLLVSRKVDAVIRGTAKASGTLSSLKKALGMKRICRLALLLTADGTPFFLAPVGIDEGNTISDKLRMITLGAEHIRRLGVEPAVGVLSGGRMGDIGRDRRVDRTLADGEFITGRALELGINTKHYTILIEDAVKESNFIIAPDGISGNLIFRTVAFLGGGDGLGAPVLMDDYVFVDTSRVGGHFTKAIMLASALSHLNKERKKVIH</sequence>
<accession>Q8Q083</accession>
<keyword id="KW-0489">Methyltransferase</keyword>
<keyword id="KW-0808">Transferase</keyword>
<gene>
    <name type="primary">mtxX</name>
    <name type="ordered locus">MM_0254</name>
</gene>
<proteinExistence type="inferred from homology"/>
<organism>
    <name type="scientific">Methanosarcina mazei (strain ATCC BAA-159 / DSM 3647 / Goe1 / Go1 / JCM 11833 / OCM 88)</name>
    <name type="common">Methanosarcina frisia</name>
    <dbReference type="NCBI Taxonomy" id="192952"/>
    <lineage>
        <taxon>Archaea</taxon>
        <taxon>Methanobacteriati</taxon>
        <taxon>Methanobacteriota</taxon>
        <taxon>Stenosarchaea group</taxon>
        <taxon>Methanomicrobia</taxon>
        <taxon>Methanosarcinales</taxon>
        <taxon>Methanosarcinaceae</taxon>
        <taxon>Methanosarcina</taxon>
    </lineage>
</organism>
<reference key="1">
    <citation type="journal article" date="2002" name="J. Mol. Microbiol. Biotechnol.">
        <title>The genome of Methanosarcina mazei: evidence for lateral gene transfer between Bacteria and Archaea.</title>
        <authorList>
            <person name="Deppenmeier U."/>
            <person name="Johann A."/>
            <person name="Hartsch T."/>
            <person name="Merkl R."/>
            <person name="Schmitz R.A."/>
            <person name="Martinez-Arias R."/>
            <person name="Henne A."/>
            <person name="Wiezer A."/>
            <person name="Baeumer S."/>
            <person name="Jacobi C."/>
            <person name="Brueggemann H."/>
            <person name="Lienard T."/>
            <person name="Christmann A."/>
            <person name="Boemecke M."/>
            <person name="Steckel S."/>
            <person name="Bhattacharyya A."/>
            <person name="Lykidis A."/>
            <person name="Overbeek R."/>
            <person name="Klenk H.-P."/>
            <person name="Gunsalus R.P."/>
            <person name="Fritz H.-J."/>
            <person name="Gottschalk G."/>
        </authorList>
    </citation>
    <scope>NUCLEOTIDE SEQUENCE [LARGE SCALE GENOMIC DNA]</scope>
    <source>
        <strain>ATCC BAA-159 / DSM 3647 / Goe1 / Go1 / JCM 11833 / OCM 88</strain>
    </source>
</reference>